<comment type="function">
    <text evidence="1">Catalyzes the conversion of glucosamine-6-phosphate to glucosamine-1-phosphate.</text>
</comment>
<comment type="catalytic activity">
    <reaction evidence="1">
        <text>alpha-D-glucosamine 1-phosphate = D-glucosamine 6-phosphate</text>
        <dbReference type="Rhea" id="RHEA:23424"/>
        <dbReference type="ChEBI" id="CHEBI:58516"/>
        <dbReference type="ChEBI" id="CHEBI:58725"/>
        <dbReference type="EC" id="5.4.2.10"/>
    </reaction>
</comment>
<comment type="cofactor">
    <cofactor evidence="1">
        <name>Mg(2+)</name>
        <dbReference type="ChEBI" id="CHEBI:18420"/>
    </cofactor>
    <text evidence="1">Binds 1 Mg(2+) ion per subunit.</text>
</comment>
<comment type="PTM">
    <text evidence="1">Activated by phosphorylation.</text>
</comment>
<comment type="similarity">
    <text evidence="1">Belongs to the phosphohexose mutase family.</text>
</comment>
<accession>B3R1R9</accession>
<sequence>MTRKYFGTDGVRGKVGDAPITPDFVMRLGHAAGKVLAHGARTGQGKPTVLIGKDTRISGYMLEAALEAGFTSAGVHVLLTGPLPTPGIAYLTRALRLSAGVVISASHNPYYDNGIKFFSASGDKLPDAVEAAIEAALDEPMVCAPSDDLGRARRIDDAAGRYIEFCKSTFPYEQDLHGLKLVVDCAHGAAYHIAPPVFHELGADVVAIGNQPNGRNINAGYGATAPEKLIEAVKANGADLGLAFDGDADRLQVVDADGRLYNGDELLYLIVRDRQAAGQAVPGAVGTLMTNMAVELALKREGVDFVRAKVGDRYVLEELNKRKWTLGGEGSGHLLCLDRHSTGDGIVSALQVLGALRRSGKTLAQLLDGVKLFPQTLINVRVQKGFDWQTHAGLQAARAAVEPELEGRGRVLIRASGTEPVVRVMVEAEQAEMAERAARKLADALGA</sequence>
<evidence type="ECO:0000255" key="1">
    <source>
        <dbReference type="HAMAP-Rule" id="MF_01554"/>
    </source>
</evidence>
<gene>
    <name evidence="1" type="primary">glmM</name>
    <name type="ordered locus">RALTA_A1976</name>
</gene>
<organism>
    <name type="scientific">Cupriavidus taiwanensis (strain DSM 17343 / BCRC 17206 / CCUG 44338 / CIP 107171 / LMG 19424 / R1)</name>
    <name type="common">Ralstonia taiwanensis (strain LMG 19424)</name>
    <dbReference type="NCBI Taxonomy" id="977880"/>
    <lineage>
        <taxon>Bacteria</taxon>
        <taxon>Pseudomonadati</taxon>
        <taxon>Pseudomonadota</taxon>
        <taxon>Betaproteobacteria</taxon>
        <taxon>Burkholderiales</taxon>
        <taxon>Burkholderiaceae</taxon>
        <taxon>Cupriavidus</taxon>
    </lineage>
</organism>
<feature type="chain" id="PRO_1000201082" description="Phosphoglucosamine mutase">
    <location>
        <begin position="1"/>
        <end position="447"/>
    </location>
</feature>
<feature type="active site" description="Phosphoserine intermediate" evidence="1">
    <location>
        <position position="106"/>
    </location>
</feature>
<feature type="binding site" description="via phosphate group" evidence="1">
    <location>
        <position position="106"/>
    </location>
    <ligand>
        <name>Mg(2+)</name>
        <dbReference type="ChEBI" id="CHEBI:18420"/>
    </ligand>
</feature>
<feature type="binding site" evidence="1">
    <location>
        <position position="245"/>
    </location>
    <ligand>
        <name>Mg(2+)</name>
        <dbReference type="ChEBI" id="CHEBI:18420"/>
    </ligand>
</feature>
<feature type="binding site" evidence="1">
    <location>
        <position position="247"/>
    </location>
    <ligand>
        <name>Mg(2+)</name>
        <dbReference type="ChEBI" id="CHEBI:18420"/>
    </ligand>
</feature>
<feature type="binding site" evidence="1">
    <location>
        <position position="249"/>
    </location>
    <ligand>
        <name>Mg(2+)</name>
        <dbReference type="ChEBI" id="CHEBI:18420"/>
    </ligand>
</feature>
<feature type="modified residue" description="Phosphoserine" evidence="1">
    <location>
        <position position="106"/>
    </location>
</feature>
<name>GLMM_CUPTR</name>
<proteinExistence type="inferred from homology"/>
<protein>
    <recommendedName>
        <fullName evidence="1">Phosphoglucosamine mutase</fullName>
        <ecNumber evidence="1">5.4.2.10</ecNumber>
    </recommendedName>
</protein>
<keyword id="KW-0413">Isomerase</keyword>
<keyword id="KW-0460">Magnesium</keyword>
<keyword id="KW-0479">Metal-binding</keyword>
<keyword id="KW-0597">Phosphoprotein</keyword>
<dbReference type="EC" id="5.4.2.10" evidence="1"/>
<dbReference type="EMBL" id="CU633749">
    <property type="protein sequence ID" value="CAQ69917.1"/>
    <property type="molecule type" value="Genomic_DNA"/>
</dbReference>
<dbReference type="RefSeq" id="WP_012353227.1">
    <property type="nucleotide sequence ID" value="NC_010528.1"/>
</dbReference>
<dbReference type="SMR" id="B3R1R9"/>
<dbReference type="GeneID" id="29762842"/>
<dbReference type="KEGG" id="cti:RALTA_A1976"/>
<dbReference type="eggNOG" id="COG1109">
    <property type="taxonomic scope" value="Bacteria"/>
</dbReference>
<dbReference type="HOGENOM" id="CLU_016950_7_0_4"/>
<dbReference type="BioCyc" id="CTAI977880:RALTA_RS09575-MONOMER"/>
<dbReference type="Proteomes" id="UP000001692">
    <property type="component" value="Chromosome 1"/>
</dbReference>
<dbReference type="GO" id="GO:0005829">
    <property type="term" value="C:cytosol"/>
    <property type="evidence" value="ECO:0007669"/>
    <property type="project" value="TreeGrafter"/>
</dbReference>
<dbReference type="GO" id="GO:0000287">
    <property type="term" value="F:magnesium ion binding"/>
    <property type="evidence" value="ECO:0007669"/>
    <property type="project" value="UniProtKB-UniRule"/>
</dbReference>
<dbReference type="GO" id="GO:0008966">
    <property type="term" value="F:phosphoglucosamine mutase activity"/>
    <property type="evidence" value="ECO:0007669"/>
    <property type="project" value="UniProtKB-UniRule"/>
</dbReference>
<dbReference type="GO" id="GO:0004615">
    <property type="term" value="F:phosphomannomutase activity"/>
    <property type="evidence" value="ECO:0007669"/>
    <property type="project" value="TreeGrafter"/>
</dbReference>
<dbReference type="GO" id="GO:0005975">
    <property type="term" value="P:carbohydrate metabolic process"/>
    <property type="evidence" value="ECO:0007669"/>
    <property type="project" value="InterPro"/>
</dbReference>
<dbReference type="GO" id="GO:0009252">
    <property type="term" value="P:peptidoglycan biosynthetic process"/>
    <property type="evidence" value="ECO:0007669"/>
    <property type="project" value="TreeGrafter"/>
</dbReference>
<dbReference type="GO" id="GO:0006048">
    <property type="term" value="P:UDP-N-acetylglucosamine biosynthetic process"/>
    <property type="evidence" value="ECO:0007669"/>
    <property type="project" value="TreeGrafter"/>
</dbReference>
<dbReference type="CDD" id="cd05802">
    <property type="entry name" value="GlmM"/>
    <property type="match status" value="1"/>
</dbReference>
<dbReference type="FunFam" id="3.30.310.50:FF:000001">
    <property type="entry name" value="Phosphoglucosamine mutase"/>
    <property type="match status" value="1"/>
</dbReference>
<dbReference type="FunFam" id="3.40.120.10:FF:000001">
    <property type="entry name" value="Phosphoglucosamine mutase"/>
    <property type="match status" value="1"/>
</dbReference>
<dbReference type="FunFam" id="3.40.120.10:FF:000003">
    <property type="entry name" value="Phosphoglucosamine mutase"/>
    <property type="match status" value="1"/>
</dbReference>
<dbReference type="Gene3D" id="3.40.120.10">
    <property type="entry name" value="Alpha-D-Glucose-1,6-Bisphosphate, subunit A, domain 3"/>
    <property type="match status" value="3"/>
</dbReference>
<dbReference type="Gene3D" id="3.30.310.50">
    <property type="entry name" value="Alpha-D-phosphohexomutase, C-terminal domain"/>
    <property type="match status" value="1"/>
</dbReference>
<dbReference type="HAMAP" id="MF_01554_B">
    <property type="entry name" value="GlmM_B"/>
    <property type="match status" value="1"/>
</dbReference>
<dbReference type="InterPro" id="IPR005844">
    <property type="entry name" value="A-D-PHexomutase_a/b/a-I"/>
</dbReference>
<dbReference type="InterPro" id="IPR016055">
    <property type="entry name" value="A-D-PHexomutase_a/b/a-I/II/III"/>
</dbReference>
<dbReference type="InterPro" id="IPR005845">
    <property type="entry name" value="A-D-PHexomutase_a/b/a-II"/>
</dbReference>
<dbReference type="InterPro" id="IPR005846">
    <property type="entry name" value="A-D-PHexomutase_a/b/a-III"/>
</dbReference>
<dbReference type="InterPro" id="IPR005843">
    <property type="entry name" value="A-D-PHexomutase_C"/>
</dbReference>
<dbReference type="InterPro" id="IPR036900">
    <property type="entry name" value="A-D-PHexomutase_C_sf"/>
</dbReference>
<dbReference type="InterPro" id="IPR016066">
    <property type="entry name" value="A-D-PHexomutase_CS"/>
</dbReference>
<dbReference type="InterPro" id="IPR005841">
    <property type="entry name" value="Alpha-D-phosphohexomutase_SF"/>
</dbReference>
<dbReference type="InterPro" id="IPR006352">
    <property type="entry name" value="GlmM_bact"/>
</dbReference>
<dbReference type="InterPro" id="IPR050060">
    <property type="entry name" value="Phosphoglucosamine_mutase"/>
</dbReference>
<dbReference type="NCBIfam" id="TIGR01455">
    <property type="entry name" value="glmM"/>
    <property type="match status" value="1"/>
</dbReference>
<dbReference type="NCBIfam" id="NF008139">
    <property type="entry name" value="PRK10887.1"/>
    <property type="match status" value="1"/>
</dbReference>
<dbReference type="PANTHER" id="PTHR42946:SF1">
    <property type="entry name" value="PHOSPHOGLUCOMUTASE (ALPHA-D-GLUCOSE-1,6-BISPHOSPHATE-DEPENDENT)"/>
    <property type="match status" value="1"/>
</dbReference>
<dbReference type="PANTHER" id="PTHR42946">
    <property type="entry name" value="PHOSPHOHEXOSE MUTASE"/>
    <property type="match status" value="1"/>
</dbReference>
<dbReference type="Pfam" id="PF02878">
    <property type="entry name" value="PGM_PMM_I"/>
    <property type="match status" value="1"/>
</dbReference>
<dbReference type="Pfam" id="PF02879">
    <property type="entry name" value="PGM_PMM_II"/>
    <property type="match status" value="1"/>
</dbReference>
<dbReference type="Pfam" id="PF02880">
    <property type="entry name" value="PGM_PMM_III"/>
    <property type="match status" value="1"/>
</dbReference>
<dbReference type="Pfam" id="PF00408">
    <property type="entry name" value="PGM_PMM_IV"/>
    <property type="match status" value="1"/>
</dbReference>
<dbReference type="PRINTS" id="PR00509">
    <property type="entry name" value="PGMPMM"/>
</dbReference>
<dbReference type="SUPFAM" id="SSF55957">
    <property type="entry name" value="Phosphoglucomutase, C-terminal domain"/>
    <property type="match status" value="1"/>
</dbReference>
<dbReference type="SUPFAM" id="SSF53738">
    <property type="entry name" value="Phosphoglucomutase, first 3 domains"/>
    <property type="match status" value="3"/>
</dbReference>
<dbReference type="PROSITE" id="PS00710">
    <property type="entry name" value="PGM_PMM"/>
    <property type="match status" value="1"/>
</dbReference>
<reference key="1">
    <citation type="journal article" date="2008" name="Genome Res.">
        <title>Genome sequence of the beta-rhizobium Cupriavidus taiwanensis and comparative genomics of rhizobia.</title>
        <authorList>
            <person name="Amadou C."/>
            <person name="Pascal G."/>
            <person name="Mangenot S."/>
            <person name="Glew M."/>
            <person name="Bontemps C."/>
            <person name="Capela D."/>
            <person name="Carrere S."/>
            <person name="Cruveiller S."/>
            <person name="Dossat C."/>
            <person name="Lajus A."/>
            <person name="Marchetti M."/>
            <person name="Poinsot V."/>
            <person name="Rouy Z."/>
            <person name="Servin B."/>
            <person name="Saad M."/>
            <person name="Schenowitz C."/>
            <person name="Barbe V."/>
            <person name="Batut J."/>
            <person name="Medigue C."/>
            <person name="Masson-Boivin C."/>
        </authorList>
    </citation>
    <scope>NUCLEOTIDE SEQUENCE [LARGE SCALE GENOMIC DNA]</scope>
    <source>
        <strain>DSM 17343 / BCRC 17206 / CCUG 44338 / CIP 107171 / LMG 19424 / R1</strain>
    </source>
</reference>